<feature type="chain" id="PRO_0000219563" description="Protein CbbQ">
    <location>
        <begin position="1"/>
        <end position="267"/>
    </location>
</feature>
<feature type="binding site" evidence="1">
    <location>
        <begin position="39"/>
        <end position="46"/>
    </location>
    <ligand>
        <name>ATP</name>
        <dbReference type="ChEBI" id="CHEBI:30616"/>
    </ligand>
</feature>
<feature type="binding site" evidence="1">
    <location>
        <begin position="99"/>
        <end position="106"/>
    </location>
    <ligand>
        <name>ATP</name>
        <dbReference type="ChEBI" id="CHEBI:30616"/>
    </ligand>
</feature>
<gene>
    <name type="primary">cbbQ</name>
</gene>
<proteinExistence type="inferred from homology"/>
<dbReference type="EMBL" id="D30764">
    <property type="protein sequence ID" value="BAA06439.1"/>
    <property type="molecule type" value="Genomic_DNA"/>
</dbReference>
<dbReference type="SMR" id="Q51858"/>
<dbReference type="GO" id="GO:0005524">
    <property type="term" value="F:ATP binding"/>
    <property type="evidence" value="ECO:0007669"/>
    <property type="project" value="UniProtKB-KW"/>
</dbReference>
<dbReference type="GO" id="GO:0016887">
    <property type="term" value="F:ATP hydrolysis activity"/>
    <property type="evidence" value="ECO:0007669"/>
    <property type="project" value="InterPro"/>
</dbReference>
<dbReference type="Gene3D" id="3.40.50.300">
    <property type="entry name" value="P-loop containing nucleotide triphosphate hydrolases"/>
    <property type="match status" value="1"/>
</dbReference>
<dbReference type="InterPro" id="IPR011704">
    <property type="entry name" value="ATPase_dyneun-rel_AAA"/>
</dbReference>
<dbReference type="InterPro" id="IPR050764">
    <property type="entry name" value="CbbQ/NirQ/NorQ/GpvN"/>
</dbReference>
<dbReference type="InterPro" id="IPR013615">
    <property type="entry name" value="CbbQ_C"/>
</dbReference>
<dbReference type="InterPro" id="IPR027417">
    <property type="entry name" value="P-loop_NTPase"/>
</dbReference>
<dbReference type="PANTHER" id="PTHR42759:SF7">
    <property type="entry name" value="DENITRIFICATION REGULATORY PROTEIN NIRQ"/>
    <property type="match status" value="1"/>
</dbReference>
<dbReference type="PANTHER" id="PTHR42759">
    <property type="entry name" value="MOXR FAMILY PROTEIN"/>
    <property type="match status" value="1"/>
</dbReference>
<dbReference type="Pfam" id="PF07728">
    <property type="entry name" value="AAA_5"/>
    <property type="match status" value="1"/>
</dbReference>
<dbReference type="Pfam" id="PF08406">
    <property type="entry name" value="CbbQ_C"/>
    <property type="match status" value="1"/>
</dbReference>
<dbReference type="SUPFAM" id="SSF52540">
    <property type="entry name" value="P-loop containing nucleoside triphosphate hydrolases"/>
    <property type="match status" value="1"/>
</dbReference>
<reference key="1">
    <citation type="journal article" date="1995" name="Gene">
        <title>Genes encoding RubisCO in Pseudomonas hydrogenothermophila are followed by a novel cbbQ gene similar to nirQ of the denitrification gene cluster from Pseudomonas species.</title>
        <authorList>
            <person name="Yokoyama K."/>
            <person name="Hayashi N.R."/>
            <person name="Arai H."/>
            <person name="Chung S.Y."/>
            <person name="Igarashi Y."/>
            <person name="Kodama T."/>
        </authorList>
    </citation>
    <scope>NUCLEOTIDE SEQUENCE [GENOMIC DNA]</scope>
    <source>
        <strain>TH-1 / NBRC 14978</strain>
    </source>
</reference>
<accession>Q51858</accession>
<sequence>MDLRNQYLVRSEPYYHAVGDEIERFEAAYANRIPMMLKGPTGCGKSRFVEYMAWKLGKPLITVACNEDMTAADLVGRFLLDKEGTRWQDGPLTTAARIGAICYLDEVVEARQDTTVVIHPLTDHRRILPLDKKGEVVEAHPDFQIVISYNPGYQSAMKDLKTSTKQRFAAMDFDYPAPEVESEIVAHESGVDAATAKKLVEVAIRSRHLKGHGLDEGISTRLLVYAGSLITKGIAPLIACEMALICPITDDPDLRYALRAAAQTLFA</sequence>
<protein>
    <recommendedName>
        <fullName>Protein CbbQ</fullName>
    </recommendedName>
</protein>
<keyword id="KW-0067">ATP-binding</keyword>
<keyword id="KW-0547">Nucleotide-binding</keyword>
<organism>
    <name type="scientific">Hydrogenophilus thermoluteolus</name>
    <name type="common">Pseudomonas hydrogenothermophila</name>
    <dbReference type="NCBI Taxonomy" id="297"/>
    <lineage>
        <taxon>Bacteria</taxon>
        <taxon>Pseudomonadati</taxon>
        <taxon>Pseudomonadota</taxon>
        <taxon>Hydrogenophilia</taxon>
        <taxon>Hydrogenophilales</taxon>
        <taxon>Hydrogenophilaceae</taxon>
        <taxon>Hydrogenophilus</taxon>
    </lineage>
</organism>
<name>CBBQ_HYDTE</name>
<evidence type="ECO:0000255" key="1"/>
<evidence type="ECO:0000305" key="2"/>
<comment type="function">
    <text>May affect the post-translational activation and/or assembly of the oligomeric structure of RuBisCO.</text>
</comment>
<comment type="similarity">
    <text evidence="2">Belongs to the CbbQ/NirQ/NorQ/GpvN family.</text>
</comment>